<sequence length="890" mass="99995">MAASVGNRQFATHMNGVVRSCGQDLKPSLPLDFDLDSSSSDDDENDDASYLKELVRKANAETEASVMDPRDEGTADQWVARNASMVRLTGKHPFNAESPLQRLMHHGFITPVPLHYVRNHGPVPKANWEDWTVEITGLVKRPTRFTMDRLVREFPHREFPATLVCAGNRRKEQNMVKKTIGFNWGSAGTSTSVWRGVPVRHVLRRCGILTRGKGALHVSFEGAENLPGGGGSKYGTSISREMAMDPSRDIILAYMQNGEPLAPDHGFPIRMIIPGFIGGRMVKWLKRIVVTEQECESHYHYKDNRVLPSHVDPELANEEGWWFKPEYIINELNINSVITTPCHDEILPINSWTTQRPYVVRGYAYSGGGRKVTRVEVTLDGGETWHVCTLDHPEKPNKYGKYWCWCFWSLEVEVLDLLGTKEIAVRAWDEGLNTQPENLIWNLMGMMNNCWFRVKTNVCKPHKGEIGIVFEHPTQPGNQPGGWMAKEKHLEQSQEAKPSLKKSVSTPFMNTASKMFSVSEVKKHSSPDSAWIIVHGHVYDCTRFLKDHPGGTDSILINAGTDCTEEFDAIHSDKAKKMLEDYRIGELITTGYTSADSSPNNSVHGNSEFIHLAPINEITTIPPLPPRSVALNPRQKIPCKLVSKTSISHDVRLFRFEMPSKNQLLGLPVGKHIFLCATIDGKLCMRAYTPTSSVEEVGFFDLLIKVYFKDVHPKFPNGGLMSQYLESLSIGSMLDVKGPLGHIEYTGRGNFTVNGKSRFAKRLAMLAGGTGITPIYQVAQAILKDPEDLTEMHVVYANRTEDDILLREELDTWAKEHCERFKVWYVVETAKEGWGYGVGFITEAIMREHLPEASSDSLAMTCGPPPMIQFAVQPNLEKMGYDIKNDLLVF</sequence>
<accession>P39866</accession>
<comment type="function">
    <text>Nitrate reductase is a key enzyme involved in the first step of nitrate assimilation in plants, fungi and bacteria.</text>
</comment>
<comment type="catalytic activity">
    <reaction>
        <text>nitrite + NAD(+) + H2O = nitrate + NADH + H(+)</text>
        <dbReference type="Rhea" id="RHEA:17913"/>
        <dbReference type="ChEBI" id="CHEBI:15377"/>
        <dbReference type="ChEBI" id="CHEBI:15378"/>
        <dbReference type="ChEBI" id="CHEBI:16301"/>
        <dbReference type="ChEBI" id="CHEBI:17632"/>
        <dbReference type="ChEBI" id="CHEBI:57540"/>
        <dbReference type="ChEBI" id="CHEBI:57945"/>
        <dbReference type="EC" id="1.7.1.1"/>
    </reaction>
</comment>
<comment type="cofactor">
    <cofactor evidence="1">
        <name>FAD</name>
        <dbReference type="ChEBI" id="CHEBI:57692"/>
    </cofactor>
    <text evidence="1">Binds 1 FAD.</text>
</comment>
<comment type="cofactor">
    <cofactor evidence="1">
        <name>heme</name>
        <dbReference type="ChEBI" id="CHEBI:30413"/>
    </cofactor>
    <text evidence="1">Binds 1 heme group. The heme group is called cytochrome b-557.</text>
</comment>
<comment type="cofactor">
    <cofactor evidence="1">
        <name>Mo-molybdopterin</name>
        <dbReference type="ChEBI" id="CHEBI:71302"/>
    </cofactor>
    <text evidence="1">Binds 1 Mo-molybdopterin (Mo-MPT) cofactor per subunit.</text>
</comment>
<comment type="subunit">
    <text evidence="1">Homodimer.</text>
</comment>
<comment type="similarity">
    <text evidence="8">Belongs to the nitrate reductase family.</text>
</comment>
<keyword id="KW-1015">Disulfide bond</keyword>
<keyword id="KW-0274">FAD</keyword>
<keyword id="KW-0285">Flavoprotein</keyword>
<keyword id="KW-0349">Heme</keyword>
<keyword id="KW-0408">Iron</keyword>
<keyword id="KW-0479">Metal-binding</keyword>
<keyword id="KW-0500">Molybdenum</keyword>
<keyword id="KW-0520">NAD</keyword>
<keyword id="KW-0534">Nitrate assimilation</keyword>
<keyword id="KW-0560">Oxidoreductase</keyword>
<protein>
    <recommendedName>
        <fullName>Nitrate reductase [NADH] 2</fullName>
        <shortName>NR-2</shortName>
        <ecNumber>1.7.1.1</ecNumber>
    </recommendedName>
</protein>
<name>NIA2_PHAVU</name>
<dbReference type="EC" id="1.7.1.1"/>
<dbReference type="EMBL" id="U01029">
    <property type="protein sequence ID" value="AAA95940.1"/>
    <property type="molecule type" value="Unassigned_DNA"/>
</dbReference>
<dbReference type="PIR" id="T11805">
    <property type="entry name" value="T11805"/>
</dbReference>
<dbReference type="SMR" id="P39866"/>
<dbReference type="eggNOG" id="KOG0534">
    <property type="taxonomic scope" value="Eukaryota"/>
</dbReference>
<dbReference type="eggNOG" id="KOG0535">
    <property type="taxonomic scope" value="Eukaryota"/>
</dbReference>
<dbReference type="eggNOG" id="KOG0537">
    <property type="taxonomic scope" value="Eukaryota"/>
</dbReference>
<dbReference type="GO" id="GO:0071949">
    <property type="term" value="F:FAD binding"/>
    <property type="evidence" value="ECO:0000250"/>
    <property type="project" value="UniProtKB"/>
</dbReference>
<dbReference type="GO" id="GO:0020037">
    <property type="term" value="F:heme binding"/>
    <property type="evidence" value="ECO:0007669"/>
    <property type="project" value="InterPro"/>
</dbReference>
<dbReference type="GO" id="GO:0030151">
    <property type="term" value="F:molybdenum ion binding"/>
    <property type="evidence" value="ECO:0000250"/>
    <property type="project" value="UniProtKB"/>
</dbReference>
<dbReference type="GO" id="GO:0043546">
    <property type="term" value="F:molybdopterin cofactor binding"/>
    <property type="evidence" value="ECO:0007669"/>
    <property type="project" value="InterPro"/>
</dbReference>
<dbReference type="GO" id="GO:0009703">
    <property type="term" value="F:nitrate reductase (NADH) activity"/>
    <property type="evidence" value="ECO:0007669"/>
    <property type="project" value="UniProtKB-EC"/>
</dbReference>
<dbReference type="GO" id="GO:0050464">
    <property type="term" value="F:nitrate reductase (NADPH) activity"/>
    <property type="evidence" value="ECO:0007669"/>
    <property type="project" value="InterPro"/>
</dbReference>
<dbReference type="GO" id="GO:0008482">
    <property type="term" value="F:sulfite oxidase activity"/>
    <property type="evidence" value="ECO:0007669"/>
    <property type="project" value="TreeGrafter"/>
</dbReference>
<dbReference type="GO" id="GO:0042128">
    <property type="term" value="P:nitrate assimilation"/>
    <property type="evidence" value="ECO:0007669"/>
    <property type="project" value="UniProtKB-KW"/>
</dbReference>
<dbReference type="GO" id="GO:0006809">
    <property type="term" value="P:nitric oxide biosynthetic process"/>
    <property type="evidence" value="ECO:0007669"/>
    <property type="project" value="InterPro"/>
</dbReference>
<dbReference type="GO" id="GO:0006790">
    <property type="term" value="P:sulfur compound metabolic process"/>
    <property type="evidence" value="ECO:0007669"/>
    <property type="project" value="TreeGrafter"/>
</dbReference>
<dbReference type="CDD" id="cd06183">
    <property type="entry name" value="cyt_b5_reduct_like"/>
    <property type="match status" value="1"/>
</dbReference>
<dbReference type="CDD" id="cd02112">
    <property type="entry name" value="eukary_NR_Moco"/>
    <property type="match status" value="1"/>
</dbReference>
<dbReference type="FunFam" id="2.40.30.10:FF:000021">
    <property type="entry name" value="NADH-cytochrome b5 reductase"/>
    <property type="match status" value="1"/>
</dbReference>
<dbReference type="FunFam" id="2.60.40.650:FF:000001">
    <property type="entry name" value="Nitrate reductase"/>
    <property type="match status" value="1"/>
</dbReference>
<dbReference type="FunFam" id="3.10.120.10:FF:000008">
    <property type="entry name" value="Nitrate reductase"/>
    <property type="match status" value="1"/>
</dbReference>
<dbReference type="FunFam" id="3.90.420.10:FF:000003">
    <property type="entry name" value="Nitrate reductase"/>
    <property type="match status" value="1"/>
</dbReference>
<dbReference type="FunFam" id="3.40.50.80:FF:000025">
    <property type="entry name" value="Nitrate reductase [NADH]"/>
    <property type="match status" value="1"/>
</dbReference>
<dbReference type="Gene3D" id="2.60.40.650">
    <property type="match status" value="1"/>
</dbReference>
<dbReference type="Gene3D" id="3.10.120.10">
    <property type="entry name" value="Cytochrome b5-like heme/steroid binding domain"/>
    <property type="match status" value="1"/>
</dbReference>
<dbReference type="Gene3D" id="3.40.50.80">
    <property type="entry name" value="Nucleotide-binding domain of ferredoxin-NADP reductase (FNR) module"/>
    <property type="match status" value="1"/>
</dbReference>
<dbReference type="Gene3D" id="3.90.420.10">
    <property type="entry name" value="Oxidoreductase, molybdopterin-binding domain"/>
    <property type="match status" value="1"/>
</dbReference>
<dbReference type="Gene3D" id="2.40.30.10">
    <property type="entry name" value="Translation factors"/>
    <property type="match status" value="1"/>
</dbReference>
<dbReference type="InterPro" id="IPR008333">
    <property type="entry name" value="Cbr1-like_FAD-bd_dom"/>
</dbReference>
<dbReference type="InterPro" id="IPR001199">
    <property type="entry name" value="Cyt_B5-like_heme/steroid-bd"/>
</dbReference>
<dbReference type="InterPro" id="IPR036400">
    <property type="entry name" value="Cyt_B5-like_heme/steroid_sf"/>
</dbReference>
<dbReference type="InterPro" id="IPR018506">
    <property type="entry name" value="Cyt_B5_heme-BS"/>
</dbReference>
<dbReference type="InterPro" id="IPR017927">
    <property type="entry name" value="FAD-bd_FR_type"/>
</dbReference>
<dbReference type="InterPro" id="IPR001709">
    <property type="entry name" value="Flavoprot_Pyr_Nucl_cyt_Rdtase"/>
</dbReference>
<dbReference type="InterPro" id="IPR039261">
    <property type="entry name" value="FNR_nucleotide-bd"/>
</dbReference>
<dbReference type="InterPro" id="IPR014756">
    <property type="entry name" value="Ig_E-set"/>
</dbReference>
<dbReference type="InterPro" id="IPR005066">
    <property type="entry name" value="MoCF_OxRdtse_dimer"/>
</dbReference>
<dbReference type="InterPro" id="IPR008335">
    <property type="entry name" value="Mopterin_OxRdtase_euk"/>
</dbReference>
<dbReference type="InterPro" id="IPR012137">
    <property type="entry name" value="Nitr_rd_NADH"/>
</dbReference>
<dbReference type="InterPro" id="IPR001433">
    <property type="entry name" value="OxRdtase_FAD/NAD-bd"/>
</dbReference>
<dbReference type="InterPro" id="IPR000572">
    <property type="entry name" value="OxRdtase_Mopterin-bd_dom"/>
</dbReference>
<dbReference type="InterPro" id="IPR036374">
    <property type="entry name" value="OxRdtase_Mopterin-bd_sf"/>
</dbReference>
<dbReference type="InterPro" id="IPR022407">
    <property type="entry name" value="OxRdtase_Mopterin_BS"/>
</dbReference>
<dbReference type="InterPro" id="IPR017938">
    <property type="entry name" value="Riboflavin_synthase-like_b-brl"/>
</dbReference>
<dbReference type="PANTHER" id="PTHR19372:SF7">
    <property type="entry name" value="SULFITE OXIDASE, MITOCHONDRIAL"/>
    <property type="match status" value="1"/>
</dbReference>
<dbReference type="PANTHER" id="PTHR19372">
    <property type="entry name" value="SULFITE REDUCTASE"/>
    <property type="match status" value="1"/>
</dbReference>
<dbReference type="Pfam" id="PF00173">
    <property type="entry name" value="Cyt-b5"/>
    <property type="match status" value="1"/>
</dbReference>
<dbReference type="Pfam" id="PF00970">
    <property type="entry name" value="FAD_binding_6"/>
    <property type="match status" value="1"/>
</dbReference>
<dbReference type="Pfam" id="PF03404">
    <property type="entry name" value="Mo-co_dimer"/>
    <property type="match status" value="1"/>
</dbReference>
<dbReference type="Pfam" id="PF00175">
    <property type="entry name" value="NAD_binding_1"/>
    <property type="match status" value="1"/>
</dbReference>
<dbReference type="Pfam" id="PF00174">
    <property type="entry name" value="Oxidored_molyb"/>
    <property type="match status" value="1"/>
</dbReference>
<dbReference type="PIRSF" id="PIRSF000233">
    <property type="entry name" value="Nitr_rd_NADH"/>
    <property type="match status" value="1"/>
</dbReference>
<dbReference type="PRINTS" id="PR00406">
    <property type="entry name" value="CYTB5RDTASE"/>
</dbReference>
<dbReference type="PRINTS" id="PR00363">
    <property type="entry name" value="CYTOCHROMEB5"/>
</dbReference>
<dbReference type="PRINTS" id="PR00407">
    <property type="entry name" value="EUMOPTERIN"/>
</dbReference>
<dbReference type="PRINTS" id="PR00371">
    <property type="entry name" value="FPNCR"/>
</dbReference>
<dbReference type="SMART" id="SM01117">
    <property type="entry name" value="Cyt-b5"/>
    <property type="match status" value="1"/>
</dbReference>
<dbReference type="SUPFAM" id="SSF55856">
    <property type="entry name" value="Cytochrome b5-like heme/steroid binding domain"/>
    <property type="match status" value="1"/>
</dbReference>
<dbReference type="SUPFAM" id="SSF81296">
    <property type="entry name" value="E set domains"/>
    <property type="match status" value="1"/>
</dbReference>
<dbReference type="SUPFAM" id="SSF52343">
    <property type="entry name" value="Ferredoxin reductase-like, C-terminal NADP-linked domain"/>
    <property type="match status" value="1"/>
</dbReference>
<dbReference type="SUPFAM" id="SSF56524">
    <property type="entry name" value="Oxidoreductase molybdopterin-binding domain"/>
    <property type="match status" value="1"/>
</dbReference>
<dbReference type="SUPFAM" id="SSF63380">
    <property type="entry name" value="Riboflavin synthase domain-like"/>
    <property type="match status" value="1"/>
</dbReference>
<dbReference type="PROSITE" id="PS00191">
    <property type="entry name" value="CYTOCHROME_B5_1"/>
    <property type="match status" value="1"/>
</dbReference>
<dbReference type="PROSITE" id="PS50255">
    <property type="entry name" value="CYTOCHROME_B5_2"/>
    <property type="match status" value="1"/>
</dbReference>
<dbReference type="PROSITE" id="PS51384">
    <property type="entry name" value="FAD_FR"/>
    <property type="match status" value="1"/>
</dbReference>
<dbReference type="PROSITE" id="PS00559">
    <property type="entry name" value="MOLYBDOPTERIN_EUK"/>
    <property type="match status" value="1"/>
</dbReference>
<proteinExistence type="inferred from homology"/>
<reference key="1">
    <citation type="submission" date="1993-08" db="EMBL/GenBank/DDBJ databases">
        <authorList>
            <person name="Jensen P.E."/>
            <person name="Hoff T."/>
            <person name="Stummann B.M."/>
            <person name="Henningsen K.W."/>
        </authorList>
    </citation>
    <scope>NUCLEOTIDE SEQUENCE</scope>
    <source>
        <strain>cv. Saxa</strain>
    </source>
</reference>
<gene>
    <name type="primary">NIA2</name>
    <name type="synonym">NR2</name>
</gene>
<feature type="chain" id="PRO_0000166068" description="Nitrate reductase [NADH] 2">
    <location>
        <begin position="1"/>
        <end position="890"/>
    </location>
</feature>
<feature type="domain" description="Cytochrome b5 heme-binding" evidence="6">
    <location>
        <begin position="513"/>
        <end position="588"/>
    </location>
</feature>
<feature type="domain" description="FAD-binding FR-type" evidence="7">
    <location>
        <begin position="634"/>
        <end position="746"/>
    </location>
</feature>
<feature type="binding site" evidence="4">
    <location>
        <position position="165"/>
    </location>
    <ligand>
        <name>Mo-molybdopterin</name>
        <dbReference type="ChEBI" id="CHEBI:71302"/>
    </ligand>
    <ligandPart>
        <name>Mo</name>
        <dbReference type="ChEBI" id="CHEBI:28685"/>
    </ligandPart>
</feature>
<feature type="binding site" description="axial binding residue" evidence="6">
    <location>
        <position position="548"/>
    </location>
    <ligand>
        <name>heme</name>
        <dbReference type="ChEBI" id="CHEBI:30413"/>
    </ligand>
    <ligandPart>
        <name>Fe</name>
        <dbReference type="ChEBI" id="CHEBI:18248"/>
    </ligandPart>
</feature>
<feature type="binding site" description="axial binding residue" evidence="6">
    <location>
        <position position="571"/>
    </location>
    <ligand>
        <name>heme</name>
        <dbReference type="ChEBI" id="CHEBI:30413"/>
    </ligand>
    <ligandPart>
        <name>Fe</name>
        <dbReference type="ChEBI" id="CHEBI:18248"/>
    </ligandPart>
</feature>
<feature type="binding site" evidence="2">
    <location>
        <begin position="686"/>
        <end position="689"/>
    </location>
    <ligand>
        <name>FAD</name>
        <dbReference type="ChEBI" id="CHEBI:57692"/>
    </ligand>
</feature>
<feature type="binding site" evidence="2">
    <location>
        <begin position="703"/>
        <end position="707"/>
    </location>
    <ligand>
        <name>FAD</name>
        <dbReference type="ChEBI" id="CHEBI:57692"/>
    </ligand>
</feature>
<feature type="binding site" evidence="3">
    <location>
        <position position="708"/>
    </location>
    <ligand>
        <name>FAD</name>
        <dbReference type="ChEBI" id="CHEBI:57692"/>
    </ligand>
</feature>
<feature type="binding site" evidence="2">
    <location>
        <position position="715"/>
    </location>
    <ligand>
        <name>FAD</name>
        <dbReference type="ChEBI" id="CHEBI:57692"/>
    </ligand>
</feature>
<feature type="binding site" evidence="2">
    <location>
        <begin position="720"/>
        <end position="722"/>
    </location>
    <ligand>
        <name>FAD</name>
        <dbReference type="ChEBI" id="CHEBI:57692"/>
    </ligand>
</feature>
<feature type="binding site" evidence="2">
    <location>
        <position position="773"/>
    </location>
    <ligand>
        <name>FAD</name>
        <dbReference type="ChEBI" id="CHEBI:57692"/>
    </ligand>
</feature>
<feature type="disulfide bond" description="Interchain" evidence="5">
    <location>
        <position position="404"/>
    </location>
</feature>
<organism>
    <name type="scientific">Phaseolus vulgaris</name>
    <name type="common">Kidney bean</name>
    <name type="synonym">French bean</name>
    <dbReference type="NCBI Taxonomy" id="3885"/>
    <lineage>
        <taxon>Eukaryota</taxon>
        <taxon>Viridiplantae</taxon>
        <taxon>Streptophyta</taxon>
        <taxon>Embryophyta</taxon>
        <taxon>Tracheophyta</taxon>
        <taxon>Spermatophyta</taxon>
        <taxon>Magnoliopsida</taxon>
        <taxon>eudicotyledons</taxon>
        <taxon>Gunneridae</taxon>
        <taxon>Pentapetalae</taxon>
        <taxon>rosids</taxon>
        <taxon>fabids</taxon>
        <taxon>Fabales</taxon>
        <taxon>Fabaceae</taxon>
        <taxon>Papilionoideae</taxon>
        <taxon>50 kb inversion clade</taxon>
        <taxon>NPAAA clade</taxon>
        <taxon>indigoferoid/millettioid clade</taxon>
        <taxon>Phaseoleae</taxon>
        <taxon>Phaseolus</taxon>
    </lineage>
</organism>
<evidence type="ECO:0000250" key="1"/>
<evidence type="ECO:0000250" key="2">
    <source>
        <dbReference type="UniProtKB" id="A0A286R227"/>
    </source>
</evidence>
<evidence type="ECO:0000250" key="3">
    <source>
        <dbReference type="UniProtKB" id="P17571"/>
    </source>
</evidence>
<evidence type="ECO:0000250" key="4">
    <source>
        <dbReference type="UniProtKB" id="P49050"/>
    </source>
</evidence>
<evidence type="ECO:0000255" key="5"/>
<evidence type="ECO:0000255" key="6">
    <source>
        <dbReference type="PROSITE-ProRule" id="PRU00279"/>
    </source>
</evidence>
<evidence type="ECO:0000255" key="7">
    <source>
        <dbReference type="PROSITE-ProRule" id="PRU00716"/>
    </source>
</evidence>
<evidence type="ECO:0000305" key="8"/>